<evidence type="ECO:0000256" key="1">
    <source>
        <dbReference type="SAM" id="MobiDB-lite"/>
    </source>
</evidence>
<evidence type="ECO:0000269" key="2">
    <source>
    </source>
</evidence>
<comment type="subcellular location">
    <subcellularLocation>
        <location evidence="2">Nucleus</location>
    </subcellularLocation>
</comment>
<accession>Q02749</accession>
<accession>D6W3U7</accession>
<feature type="chain" id="PRO_0000238642" description="Uncharacterized protein YPL068C">
    <location>
        <begin position="1"/>
        <end position="293"/>
    </location>
</feature>
<feature type="region of interest" description="Disordered" evidence="1">
    <location>
        <begin position="1"/>
        <end position="28"/>
    </location>
</feature>
<feature type="compositionally biased region" description="Basic residues" evidence="1">
    <location>
        <begin position="1"/>
        <end position="10"/>
    </location>
</feature>
<feature type="compositionally biased region" description="Polar residues" evidence="1">
    <location>
        <begin position="15"/>
        <end position="28"/>
    </location>
</feature>
<gene>
    <name type="ordered locus">YPL068C</name>
</gene>
<reference key="1">
    <citation type="journal article" date="1997" name="Nature">
        <title>The nucleotide sequence of Saccharomyces cerevisiae chromosome XVI.</title>
        <authorList>
            <person name="Bussey H."/>
            <person name="Storms R.K."/>
            <person name="Ahmed A."/>
            <person name="Albermann K."/>
            <person name="Allen E."/>
            <person name="Ansorge W."/>
            <person name="Araujo R."/>
            <person name="Aparicio A."/>
            <person name="Barrell B.G."/>
            <person name="Badcock K."/>
            <person name="Benes V."/>
            <person name="Botstein D."/>
            <person name="Bowman S."/>
            <person name="Brueckner M."/>
            <person name="Carpenter J."/>
            <person name="Cherry J.M."/>
            <person name="Chung E."/>
            <person name="Churcher C.M."/>
            <person name="Coster F."/>
            <person name="Davis K."/>
            <person name="Davis R.W."/>
            <person name="Dietrich F.S."/>
            <person name="Delius H."/>
            <person name="DiPaolo T."/>
            <person name="Dubois E."/>
            <person name="Duesterhoeft A."/>
            <person name="Duncan M."/>
            <person name="Floeth M."/>
            <person name="Fortin N."/>
            <person name="Friesen J.D."/>
            <person name="Fritz C."/>
            <person name="Goffeau A."/>
            <person name="Hall J."/>
            <person name="Hebling U."/>
            <person name="Heumann K."/>
            <person name="Hilbert H."/>
            <person name="Hillier L.W."/>
            <person name="Hunicke-Smith S."/>
            <person name="Hyman R.W."/>
            <person name="Johnston M."/>
            <person name="Kalman S."/>
            <person name="Kleine K."/>
            <person name="Komp C."/>
            <person name="Kurdi O."/>
            <person name="Lashkari D."/>
            <person name="Lew H."/>
            <person name="Lin A."/>
            <person name="Lin D."/>
            <person name="Louis E.J."/>
            <person name="Marathe R."/>
            <person name="Messenguy F."/>
            <person name="Mewes H.-W."/>
            <person name="Mirtipati S."/>
            <person name="Moestl D."/>
            <person name="Mueller-Auer S."/>
            <person name="Namath A."/>
            <person name="Nentwich U."/>
            <person name="Oefner P."/>
            <person name="Pearson D."/>
            <person name="Petel F.X."/>
            <person name="Pohl T.M."/>
            <person name="Purnelle B."/>
            <person name="Rajandream M.A."/>
            <person name="Rechmann S."/>
            <person name="Rieger M."/>
            <person name="Riles L."/>
            <person name="Roberts D."/>
            <person name="Schaefer M."/>
            <person name="Scharfe M."/>
            <person name="Scherens B."/>
            <person name="Schramm S."/>
            <person name="Schroeder M."/>
            <person name="Sdicu A.-M."/>
            <person name="Tettelin H."/>
            <person name="Urrestarazu L.A."/>
            <person name="Ushinsky S."/>
            <person name="Vierendeels F."/>
            <person name="Vissers S."/>
            <person name="Voss H."/>
            <person name="Walsh S.V."/>
            <person name="Wambutt R."/>
            <person name="Wang Y."/>
            <person name="Wedler E."/>
            <person name="Wedler H."/>
            <person name="Winnett E."/>
            <person name="Zhong W.-W."/>
            <person name="Zollner A."/>
            <person name="Vo D.H."/>
            <person name="Hani J."/>
        </authorList>
    </citation>
    <scope>NUCLEOTIDE SEQUENCE [LARGE SCALE GENOMIC DNA]</scope>
    <source>
        <strain>ATCC 204508 / S288c</strain>
    </source>
</reference>
<reference key="2">
    <citation type="journal article" date="2014" name="G3 (Bethesda)">
        <title>The reference genome sequence of Saccharomyces cerevisiae: Then and now.</title>
        <authorList>
            <person name="Engel S.R."/>
            <person name="Dietrich F.S."/>
            <person name="Fisk D.G."/>
            <person name="Binkley G."/>
            <person name="Balakrishnan R."/>
            <person name="Costanzo M.C."/>
            <person name="Dwight S.S."/>
            <person name="Hitz B.C."/>
            <person name="Karra K."/>
            <person name="Nash R.S."/>
            <person name="Weng S."/>
            <person name="Wong E.D."/>
            <person name="Lloyd P."/>
            <person name="Skrzypek M.S."/>
            <person name="Miyasato S.R."/>
            <person name="Simison M."/>
            <person name="Cherry J.M."/>
        </authorList>
    </citation>
    <scope>GENOME REANNOTATION</scope>
    <source>
        <strain>ATCC 204508 / S288c</strain>
    </source>
</reference>
<reference key="3">
    <citation type="journal article" date="2003" name="Nature">
        <title>Global analysis of protein localization in budding yeast.</title>
        <authorList>
            <person name="Huh W.-K."/>
            <person name="Falvo J.V."/>
            <person name="Gerke L.C."/>
            <person name="Carroll A.S."/>
            <person name="Howson R.W."/>
            <person name="Weissman J.S."/>
            <person name="O'Shea E.K."/>
        </authorList>
    </citation>
    <scope>SUBCELLULAR LOCATION [LARGE SCALE ANALYSIS]</scope>
</reference>
<dbReference type="EMBL" id="U39205">
    <property type="protein sequence ID" value="AAB68297.1"/>
    <property type="molecule type" value="Genomic_DNA"/>
</dbReference>
<dbReference type="EMBL" id="BK006949">
    <property type="protein sequence ID" value="DAA11363.1"/>
    <property type="molecule type" value="Genomic_DNA"/>
</dbReference>
<dbReference type="PIR" id="S60922">
    <property type="entry name" value="S60922"/>
</dbReference>
<dbReference type="RefSeq" id="NP_015257.1">
    <property type="nucleotide sequence ID" value="NM_001183882.1"/>
</dbReference>
<dbReference type="BioGRID" id="36111">
    <property type="interactions" value="97"/>
</dbReference>
<dbReference type="DIP" id="DIP-4031N"/>
<dbReference type="FunCoup" id="Q02749">
    <property type="interactions" value="35"/>
</dbReference>
<dbReference type="IntAct" id="Q02749">
    <property type="interactions" value="3"/>
</dbReference>
<dbReference type="STRING" id="4932.YPL068C"/>
<dbReference type="iPTMnet" id="Q02749"/>
<dbReference type="PaxDb" id="4932-YPL068C"/>
<dbReference type="PeptideAtlas" id="Q02749"/>
<dbReference type="TopDownProteomics" id="Q02749"/>
<dbReference type="EnsemblFungi" id="YPL068C_mRNA">
    <property type="protein sequence ID" value="YPL068C"/>
    <property type="gene ID" value="YPL068C"/>
</dbReference>
<dbReference type="GeneID" id="856037"/>
<dbReference type="KEGG" id="sce:YPL068C"/>
<dbReference type="AGR" id="SGD:S000005989"/>
<dbReference type="SGD" id="S000005989">
    <property type="gene designation" value="YPL068C"/>
</dbReference>
<dbReference type="VEuPathDB" id="FungiDB:YPL068C"/>
<dbReference type="eggNOG" id="ENOG502SDIG">
    <property type="taxonomic scope" value="Eukaryota"/>
</dbReference>
<dbReference type="HOGENOM" id="CLU_078843_0_0_1"/>
<dbReference type="InParanoid" id="Q02749"/>
<dbReference type="OMA" id="GTAYHND"/>
<dbReference type="OrthoDB" id="4067097at2759"/>
<dbReference type="BioCyc" id="YEAST:G3O-33977-MONOMER"/>
<dbReference type="BioGRID-ORCS" id="856037">
    <property type="hits" value="0 hits in 10 CRISPR screens"/>
</dbReference>
<dbReference type="PRO" id="PR:Q02749"/>
<dbReference type="Proteomes" id="UP000002311">
    <property type="component" value="Chromosome XVI"/>
</dbReference>
<dbReference type="RNAct" id="Q02749">
    <property type="molecule type" value="protein"/>
</dbReference>
<dbReference type="GO" id="GO:0005634">
    <property type="term" value="C:nucleus"/>
    <property type="evidence" value="ECO:0007005"/>
    <property type="project" value="SGD"/>
</dbReference>
<organism>
    <name type="scientific">Saccharomyces cerevisiae (strain ATCC 204508 / S288c)</name>
    <name type="common">Baker's yeast</name>
    <dbReference type="NCBI Taxonomy" id="559292"/>
    <lineage>
        <taxon>Eukaryota</taxon>
        <taxon>Fungi</taxon>
        <taxon>Dikarya</taxon>
        <taxon>Ascomycota</taxon>
        <taxon>Saccharomycotina</taxon>
        <taxon>Saccharomycetes</taxon>
        <taxon>Saccharomycetales</taxon>
        <taxon>Saccharomycetaceae</taxon>
        <taxon>Saccharomyces</taxon>
    </lineage>
</organism>
<proteinExistence type="evidence at protein level"/>
<keyword id="KW-0539">Nucleus</keyword>
<keyword id="KW-1185">Reference proteome</keyword>
<sequence length="293" mass="33098">MHMQLRKRKRVDYSGRNQTSDPPSTTTAAVPSIIVPKKRKVVAQNMVSPAIRATTTTLGTSNIIIPKPLQRPKFHNSASLSSPDDDPEKISVLEVQKNLSNLIKRQQRLFYKDIHKPTLAGLKNFEMLRLPNDLKLLQNIVNLLYSFEQLNSDSKTRPVTTSKLKASSQAHSDKLKKMLAERKPPFSHPSHSGTAYHNDIIHEIANLHSINLVDLINLEVYNNNCHTNNTALQTTANSLTLNSIIKKLDKPILKERNNSLVWPHKSRFKAKRNQPSPGQSLINNTDITLYNDV</sequence>
<protein>
    <recommendedName>
        <fullName>Uncharacterized protein YPL068C</fullName>
    </recommendedName>
</protein>
<name>YP068_YEAST</name>